<protein>
    <recommendedName>
        <fullName>Arcelin-1</fullName>
    </recommendedName>
</protein>
<keyword id="KW-0002">3D-structure</keyword>
<keyword id="KW-0903">Direct protein sequencing</keyword>
<keyword id="KW-1015">Disulfide bond</keyword>
<keyword id="KW-0325">Glycoprotein</keyword>
<keyword id="KW-0430">Lectin</keyword>
<keyword id="KW-0611">Plant defense</keyword>
<keyword id="KW-0708">Seed storage protein</keyword>
<keyword id="KW-0732">Signal</keyword>
<keyword id="KW-0758">Storage protein</keyword>
<keyword id="KW-0800">Toxin</keyword>
<organism>
    <name type="scientific">Phaseolus vulgaris</name>
    <name type="common">Kidney bean</name>
    <name type="synonym">French bean</name>
    <dbReference type="NCBI Taxonomy" id="3885"/>
    <lineage>
        <taxon>Eukaryota</taxon>
        <taxon>Viridiplantae</taxon>
        <taxon>Streptophyta</taxon>
        <taxon>Embryophyta</taxon>
        <taxon>Tracheophyta</taxon>
        <taxon>Spermatophyta</taxon>
        <taxon>Magnoliopsida</taxon>
        <taxon>eudicotyledons</taxon>
        <taxon>Gunneridae</taxon>
        <taxon>Pentapetalae</taxon>
        <taxon>rosids</taxon>
        <taxon>fabids</taxon>
        <taxon>Fabales</taxon>
        <taxon>Fabaceae</taxon>
        <taxon>Papilionoideae</taxon>
        <taxon>50 kb inversion clade</taxon>
        <taxon>NPAAA clade</taxon>
        <taxon>indigoferoid/millettioid clade</taxon>
        <taxon>Phaseoleae</taxon>
        <taxon>Phaseolus</taxon>
    </lineage>
</organism>
<sequence length="265" mass="29255">MASSNLLTLALFLVLLTHANSSNDASFNVETFNKTNLILQGDATVSSEGHLLLTNVKGNEEDSMGRAFYSAPIQINDRTIDNLASFSTNFTFRINAKNIENSAYGLAFALVPVGSRPKLKGRYLGLFNTTNYDRDAHTVAVVFDTVSNRIEIDVNSIRPIATESCNFGHNNGEKAEVRITYDSPKNDLRVSLLYPSSEEKCHVSATVPLEKEVEDWVSVGFSATSGSKKETTETHNVLSWSFSSNFINFKGKKSERSNILLNKIL</sequence>
<proteinExistence type="evidence at protein level"/>
<name>ARC1_PHAVU</name>
<accession>P19329</accession>
<feature type="signal peptide" evidence="2">
    <location>
        <begin position="1"/>
        <end position="21"/>
    </location>
</feature>
<feature type="chain" id="PRO_0000017636" description="Arcelin-1">
    <location>
        <begin position="22"/>
        <end position="265"/>
    </location>
</feature>
<feature type="glycosylation site" description="N-linked (GlcNAc...) asparagine">
    <location>
        <position position="33"/>
    </location>
</feature>
<feature type="glycosylation site" description="N-linked (GlcNAc...) asparagine" evidence="1">
    <location>
        <position position="89"/>
    </location>
</feature>
<feature type="glycosylation site" description="N-linked (GlcNAc...) asparagine" evidence="1">
    <location>
        <position position="128"/>
    </location>
</feature>
<feature type="disulfide bond">
    <location>
        <begin position="165"/>
        <end position="201"/>
    </location>
</feature>
<feature type="strand" evidence="4">
    <location>
        <begin position="23"/>
        <end position="31"/>
    </location>
</feature>
<feature type="helix" evidence="4">
    <location>
        <begin position="34"/>
        <end position="36"/>
    </location>
</feature>
<feature type="strand" evidence="4">
    <location>
        <begin position="37"/>
        <end position="41"/>
    </location>
</feature>
<feature type="strand" evidence="4">
    <location>
        <begin position="56"/>
        <end position="58"/>
    </location>
</feature>
<feature type="strand" evidence="4">
    <location>
        <begin position="64"/>
        <end position="71"/>
    </location>
</feature>
<feature type="helix" evidence="4">
    <location>
        <begin position="78"/>
        <end position="80"/>
    </location>
</feature>
<feature type="strand" evidence="4">
    <location>
        <begin position="82"/>
        <end position="98"/>
    </location>
</feature>
<feature type="strand" evidence="4">
    <location>
        <begin position="104"/>
        <end position="112"/>
    </location>
</feature>
<feature type="helix" evidence="4">
    <location>
        <begin position="121"/>
        <end position="123"/>
    </location>
</feature>
<feature type="turn" evidence="4">
    <location>
        <begin position="124"/>
        <end position="126"/>
    </location>
</feature>
<feature type="helix" evidence="4">
    <location>
        <begin position="134"/>
        <end position="136"/>
    </location>
</feature>
<feature type="strand" evidence="4">
    <location>
        <begin position="139"/>
        <end position="144"/>
    </location>
</feature>
<feature type="turn" evidence="4">
    <location>
        <begin position="145"/>
        <end position="148"/>
    </location>
</feature>
<feature type="strand" evidence="4">
    <location>
        <begin position="149"/>
        <end position="158"/>
    </location>
</feature>
<feature type="strand" evidence="4">
    <location>
        <begin position="160"/>
        <end position="164"/>
    </location>
</feature>
<feature type="helix" evidence="4">
    <location>
        <begin position="168"/>
        <end position="170"/>
    </location>
</feature>
<feature type="strand" evidence="4">
    <location>
        <begin position="174"/>
        <end position="182"/>
    </location>
</feature>
<feature type="helix" evidence="4">
    <location>
        <begin position="183"/>
        <end position="185"/>
    </location>
</feature>
<feature type="strand" evidence="4">
    <location>
        <begin position="187"/>
        <end position="193"/>
    </location>
</feature>
<feature type="turn" evidence="4">
    <location>
        <begin position="195"/>
        <end position="197"/>
    </location>
</feature>
<feature type="strand" evidence="4">
    <location>
        <begin position="200"/>
        <end position="206"/>
    </location>
</feature>
<feature type="helix" evidence="4">
    <location>
        <begin position="209"/>
        <end position="212"/>
    </location>
</feature>
<feature type="strand" evidence="4">
    <location>
        <begin position="215"/>
        <end position="225"/>
    </location>
</feature>
<feature type="helix" evidence="4">
    <location>
        <begin position="229"/>
        <end position="231"/>
    </location>
</feature>
<feature type="strand" evidence="4">
    <location>
        <begin position="233"/>
        <end position="246"/>
    </location>
</feature>
<evidence type="ECO:0000255" key="1"/>
<evidence type="ECO:0000269" key="2">
    <source ref="1"/>
</evidence>
<evidence type="ECO:0000305" key="3"/>
<evidence type="ECO:0007829" key="4">
    <source>
        <dbReference type="PDB" id="1AVB"/>
    </source>
</evidence>
<gene>
    <name type="primary">ARC1</name>
    <name type="synonym">ARC</name>
</gene>
<reference key="1">
    <citation type="journal article" date="1988" name="Science">
        <title>Insecticidal activity and lectin homology of arcelin seed protein.</title>
        <authorList>
            <person name="Osborn T.C."/>
            <person name="Alexander D.C."/>
            <person name="Sun S.S.M."/>
            <person name="Cardona C."/>
            <person name="Bliss F.A."/>
        </authorList>
    </citation>
    <scope>NUCLEOTIDE SEQUENCE</scope>
    <scope>PROTEIN SEQUENCE OF 22-69</scope>
    <source>
        <strain>cv. Sanilac</strain>
    </source>
</reference>
<reference key="2">
    <citation type="journal article" date="1991" name="Plant Physiol.">
        <title>Nucleotide sequence of a genomic clone encoding arcelin, a lectin-like seed protein from Phaseolus vulgaris.</title>
        <authorList>
            <person name="Anthony J.L."/>
            <person name="Vonder Haar R.A."/>
            <person name="Hall T.C."/>
        </authorList>
    </citation>
    <scope>NUCLEOTIDE SEQUENCE</scope>
</reference>
<reference key="3">
    <citation type="journal article" date="1998" name="J. Biol. Chem.">
        <title>Crystal structure of the arcelin-1 dimer from Phaseolus vulgaris at 1.9-A resolution.</title>
        <authorList>
            <person name="Mourey L."/>
            <person name="Pedelacq J.-D."/>
            <person name="Birck C."/>
            <person name="Fabre C."/>
            <person name="Rouge P."/>
            <person name="Samama J.-P."/>
        </authorList>
    </citation>
    <scope>X-RAY CRYSTALLOGRAPHY (1.9 ANGSTROMS)</scope>
    <source>
        <strain>cv. RAZ-2</strain>
    </source>
</reference>
<dbReference type="EMBL" id="M19430">
    <property type="protein sequence ID" value="AAA33752.1"/>
    <property type="molecule type" value="mRNA"/>
</dbReference>
<dbReference type="EMBL" id="M68913">
    <property type="protein sequence ID" value="AAA33753.1"/>
    <property type="molecule type" value="Genomic_DNA"/>
</dbReference>
<dbReference type="PIR" id="A40111">
    <property type="entry name" value="A40111"/>
</dbReference>
<dbReference type="PDB" id="1AVB">
    <property type="method" value="X-ray"/>
    <property type="resolution" value="1.90 A"/>
    <property type="chains" value="A/B=22-247"/>
</dbReference>
<dbReference type="PDBsum" id="1AVB"/>
<dbReference type="SMR" id="P19329"/>
<dbReference type="GlyCosmos" id="P19329">
    <property type="glycosylation" value="3 sites, No reported glycans"/>
</dbReference>
<dbReference type="EvolutionaryTrace" id="P19329"/>
<dbReference type="GO" id="GO:0030246">
    <property type="term" value="F:carbohydrate binding"/>
    <property type="evidence" value="ECO:0007669"/>
    <property type="project" value="UniProtKB-KW"/>
</dbReference>
<dbReference type="GO" id="GO:0045735">
    <property type="term" value="F:nutrient reservoir activity"/>
    <property type="evidence" value="ECO:0007669"/>
    <property type="project" value="UniProtKB-KW"/>
</dbReference>
<dbReference type="GO" id="GO:0090729">
    <property type="term" value="F:toxin activity"/>
    <property type="evidence" value="ECO:0007669"/>
    <property type="project" value="UniProtKB-KW"/>
</dbReference>
<dbReference type="GO" id="GO:0006952">
    <property type="term" value="P:defense response"/>
    <property type="evidence" value="ECO:0007669"/>
    <property type="project" value="UniProtKB-KW"/>
</dbReference>
<dbReference type="CDD" id="cd06899">
    <property type="entry name" value="lectin_legume_LecRK_Arcelin_ConA"/>
    <property type="match status" value="1"/>
</dbReference>
<dbReference type="Gene3D" id="2.60.120.200">
    <property type="match status" value="1"/>
</dbReference>
<dbReference type="InterPro" id="IPR013320">
    <property type="entry name" value="ConA-like_dom_sf"/>
</dbReference>
<dbReference type="InterPro" id="IPR016363">
    <property type="entry name" value="L-lectin"/>
</dbReference>
<dbReference type="InterPro" id="IPR000985">
    <property type="entry name" value="Lectin_LegA_CS"/>
</dbReference>
<dbReference type="InterPro" id="IPR019825">
    <property type="entry name" value="Lectin_legB_Mn/Ca_BS"/>
</dbReference>
<dbReference type="InterPro" id="IPR001220">
    <property type="entry name" value="Legume_lectin_dom"/>
</dbReference>
<dbReference type="InterPro" id="IPR050258">
    <property type="entry name" value="Leguminous_Lectin"/>
</dbReference>
<dbReference type="PANTHER" id="PTHR32401">
    <property type="entry name" value="CONCANAVALIN A-LIKE LECTIN FAMILY PROTEIN"/>
    <property type="match status" value="1"/>
</dbReference>
<dbReference type="PANTHER" id="PTHR32401:SF45">
    <property type="entry name" value="LECTIN"/>
    <property type="match status" value="1"/>
</dbReference>
<dbReference type="Pfam" id="PF00139">
    <property type="entry name" value="Lectin_legB"/>
    <property type="match status" value="1"/>
</dbReference>
<dbReference type="PIRSF" id="PIRSF002690">
    <property type="entry name" value="L-type_lectin_plant"/>
    <property type="match status" value="1"/>
</dbReference>
<dbReference type="SUPFAM" id="SSF49899">
    <property type="entry name" value="Concanavalin A-like lectins/glucanases"/>
    <property type="match status" value="1"/>
</dbReference>
<dbReference type="PROSITE" id="PS00308">
    <property type="entry name" value="LECTIN_LEGUME_ALPHA"/>
    <property type="match status" value="1"/>
</dbReference>
<dbReference type="PROSITE" id="PS00307">
    <property type="entry name" value="LECTIN_LEGUME_BETA"/>
    <property type="match status" value="1"/>
</dbReference>
<comment type="function">
    <text>Seed storage. This carbohydrate-binding lectin has toxic effects on an important bean bruchid pest, Z.subfasciatus. Antibiosis properties of legume lectins are proposed to be due to the lysis of epithelial cells of the intestine by binding to the carbohydrate moieties of these proteins.</text>
</comment>
<comment type="subunit">
    <text>Homodimer.</text>
</comment>
<comment type="similarity">
    <text evidence="3">Belongs to the leguminous lectin family.</text>
</comment>